<comment type="catalytic activity">
    <reaction>
        <text>L-seryl-[protein] + ATP = O-phospho-L-seryl-[protein] + ADP + H(+)</text>
        <dbReference type="Rhea" id="RHEA:17989"/>
        <dbReference type="Rhea" id="RHEA-COMP:9863"/>
        <dbReference type="Rhea" id="RHEA-COMP:11604"/>
        <dbReference type="ChEBI" id="CHEBI:15378"/>
        <dbReference type="ChEBI" id="CHEBI:29999"/>
        <dbReference type="ChEBI" id="CHEBI:30616"/>
        <dbReference type="ChEBI" id="CHEBI:83421"/>
        <dbReference type="ChEBI" id="CHEBI:456216"/>
        <dbReference type="EC" id="2.7.11.1"/>
    </reaction>
</comment>
<comment type="catalytic activity">
    <reaction>
        <text>L-threonyl-[protein] + ATP = O-phospho-L-threonyl-[protein] + ADP + H(+)</text>
        <dbReference type="Rhea" id="RHEA:46608"/>
        <dbReference type="Rhea" id="RHEA-COMP:11060"/>
        <dbReference type="Rhea" id="RHEA-COMP:11605"/>
        <dbReference type="ChEBI" id="CHEBI:15378"/>
        <dbReference type="ChEBI" id="CHEBI:30013"/>
        <dbReference type="ChEBI" id="CHEBI:30616"/>
        <dbReference type="ChEBI" id="CHEBI:61977"/>
        <dbReference type="ChEBI" id="CHEBI:456216"/>
        <dbReference type="EC" id="2.7.11.1"/>
    </reaction>
</comment>
<comment type="interaction">
    <interactant intactId="EBI-20657656">
        <id>C0LGH8</id>
    </interactant>
    <interactant intactId="EBI-20655099">
        <id>Q0WVM4</id>
        <label>At2g23950</label>
    </interactant>
    <organismsDiffer>false</organismsDiffer>
    <experiments>3</experiments>
</comment>
<comment type="interaction">
    <interactant intactId="EBI-20657656">
        <id>C0LGH8</id>
    </interactant>
    <interactant intactId="EBI-1238677">
        <id>Q9M8T0</id>
        <label>At3g02880</label>
    </interactant>
    <organismsDiffer>false</organismsDiffer>
    <experiments>3</experiments>
</comment>
<comment type="interaction">
    <interactant intactId="EBI-20657656">
        <id>C0LGH8</id>
    </interactant>
    <interactant intactId="EBI-16912451">
        <id>Q9SUQ3</id>
        <label>At4g23740</label>
    </interactant>
    <organismsDiffer>false</organismsDiffer>
    <experiments>3</experiments>
</comment>
<comment type="interaction">
    <interactant intactId="EBI-20657656">
        <id>C0LGH8</id>
    </interactant>
    <interactant intactId="EBI-16955262">
        <id>C0LGR9</id>
        <label>At4g31250</label>
    </interactant>
    <organismsDiffer>false</organismsDiffer>
    <experiments>2</experiments>
</comment>
<comment type="interaction">
    <interactant intactId="EBI-20657656">
        <id>C0LGH8</id>
    </interactant>
    <interactant intactId="EBI-16903983">
        <id>Q9FMD7</id>
        <label>At5g16590</label>
    </interactant>
    <organismsDiffer>false</organismsDiffer>
    <experiments>3</experiments>
</comment>
<comment type="interaction">
    <interactant intactId="EBI-20657656">
        <id>C0LGH8</id>
    </interactant>
    <interactant intactId="EBI-16964970">
        <id>C0LGU5</id>
        <label>At5g45780</label>
    </interactant>
    <organismsDiffer>false</organismsDiffer>
    <experiments>3</experiments>
</comment>
<comment type="interaction">
    <interactant intactId="EBI-20657656">
        <id>C0LGH8</id>
    </interactant>
    <interactant intactId="EBI-20653342">
        <id>A0A178UFM8</id>
        <label>At5g51560</label>
    </interactant>
    <organismsDiffer>false</organismsDiffer>
    <experiments>3</experiments>
</comment>
<comment type="interaction">
    <interactant intactId="EBI-20657656">
        <id>C0LGH8</id>
    </interactant>
    <interactant intactId="EBI-16934827">
        <id>Q8W4S5</id>
        <label>At5g63710</label>
    </interactant>
    <organismsDiffer>false</organismsDiffer>
    <experiments>3</experiments>
</comment>
<comment type="interaction">
    <interactant intactId="EBI-20657656">
        <id>C0LGH8</id>
    </interactant>
    <interactant intactId="EBI-16946020">
        <id>O22138</id>
        <label>LRR-RLK</label>
    </interactant>
    <organismsDiffer>false</organismsDiffer>
    <experiments>4</experiments>
</comment>
<comment type="interaction">
    <interactant intactId="EBI-20657656">
        <id>C0LGH8</id>
    </interactant>
    <interactant intactId="EBI-16914444">
        <id>Q9LJY0</id>
        <label>PRK4</label>
    </interactant>
    <organismsDiffer>false</organismsDiffer>
    <experiments>2</experiments>
</comment>
<comment type="interaction">
    <interactant intactId="EBI-20657656">
        <id>C0LGH8</id>
    </interactant>
    <interactant intactId="EBI-1626936">
        <id>Q9LVI6</id>
        <label>RLK902</label>
    </interactant>
    <organismsDiffer>false</organismsDiffer>
    <experiments>4</experiments>
</comment>
<comment type="subcellular location">
    <subcellularLocation>
        <location evidence="1">Cell membrane</location>
        <topology evidence="1">Single-pass type I membrane protein</topology>
    </subcellularLocation>
</comment>
<comment type="alternative products">
    <event type="alternative splicing"/>
    <isoform>
        <id>C0LGH8-1</id>
        <name>1</name>
        <sequence type="displayed"/>
    </isoform>
    <text>A number of isoforms are produced. According to EST sequences.</text>
</comment>
<comment type="similarity">
    <text evidence="3">Belongs to the protein kinase superfamily. Ser/Thr protein kinase family.</text>
</comment>
<comment type="sequence caution" evidence="4">
    <conflict type="erroneous gene model prediction">
        <sequence resource="EMBL-CDS" id="AAF19706"/>
    </conflict>
</comment>
<sequence>MRSKYFCSLALVLGLFFVSCDGFASNEVQALRRFKEAIYEDPLLVMSNWNDPNSDPCDWTGIYCSPSKDHVIKINISASSIKGFLAPELGQITYLQELILHGNILIGTIPKEIGNLKNLKILDLGNNHLMGPIPAEIGSLSGIMIINLQSNGLTGKLPAELGNLKYLRELHIDRNRLQGSLLVAGASGYQSKVYSSNSSANIAGLCKSLKVADFSYNFFVGNIPKCLENLPRTSFQGNCMQNKDLKHRSSSQCANAQLVKTHGSPSAAPKHQSAQMVAKHHRASKPKWLLALEIVTGSMVGLLLLVALFSAVHRWNNRSTLIIPWKKSSSEKEKFTVYVDSEMLKDVSRLTRQELEVACEDFSNIIGLSADSQIYKGTLKGGSEIAVISLCVKEEDWTGYLELYFQREVADLARLNHENTAKLLGYCKEISPFTRMLVFEYASNGTLYEHLHYGEAALVSWARRMKIVIGIARGLKYLHMELDPPFTISELSSNAIYLTEDFTPKLVDFECWKTILARSEKNLRNISSQGSICVLPNGMESRYLDVSGNIYAFGILLLEIVSGRPPYCKDKGFLIEWAKEFLEAPEAMSGLVDPELKHFNQEDLETVCEVASQCLNRDPTNNNNNHNKPSVQELCETLESRISLSISAELRSSSLAWAELALDS</sequence>
<reference key="1">
    <citation type="journal article" date="2000" name="Nature">
        <title>Sequence and analysis of chromosome 1 of the plant Arabidopsis thaliana.</title>
        <authorList>
            <person name="Theologis A."/>
            <person name="Ecker J.R."/>
            <person name="Palm C.J."/>
            <person name="Federspiel N.A."/>
            <person name="Kaul S."/>
            <person name="White O."/>
            <person name="Alonso J."/>
            <person name="Altafi H."/>
            <person name="Araujo R."/>
            <person name="Bowman C.L."/>
            <person name="Brooks S.Y."/>
            <person name="Buehler E."/>
            <person name="Chan A."/>
            <person name="Chao Q."/>
            <person name="Chen H."/>
            <person name="Cheuk R.F."/>
            <person name="Chin C.W."/>
            <person name="Chung M.K."/>
            <person name="Conn L."/>
            <person name="Conway A.B."/>
            <person name="Conway A.R."/>
            <person name="Creasy T.H."/>
            <person name="Dewar K."/>
            <person name="Dunn P."/>
            <person name="Etgu P."/>
            <person name="Feldblyum T.V."/>
            <person name="Feng J.-D."/>
            <person name="Fong B."/>
            <person name="Fujii C.Y."/>
            <person name="Gill J.E."/>
            <person name="Goldsmith A.D."/>
            <person name="Haas B."/>
            <person name="Hansen N.F."/>
            <person name="Hughes B."/>
            <person name="Huizar L."/>
            <person name="Hunter J.L."/>
            <person name="Jenkins J."/>
            <person name="Johnson-Hopson C."/>
            <person name="Khan S."/>
            <person name="Khaykin E."/>
            <person name="Kim C.J."/>
            <person name="Koo H.L."/>
            <person name="Kremenetskaia I."/>
            <person name="Kurtz D.B."/>
            <person name="Kwan A."/>
            <person name="Lam B."/>
            <person name="Langin-Hooper S."/>
            <person name="Lee A."/>
            <person name="Lee J.M."/>
            <person name="Lenz C.A."/>
            <person name="Li J.H."/>
            <person name="Li Y.-P."/>
            <person name="Lin X."/>
            <person name="Liu S.X."/>
            <person name="Liu Z.A."/>
            <person name="Luros J.S."/>
            <person name="Maiti R."/>
            <person name="Marziali A."/>
            <person name="Militscher J."/>
            <person name="Miranda M."/>
            <person name="Nguyen M."/>
            <person name="Nierman W.C."/>
            <person name="Osborne B.I."/>
            <person name="Pai G."/>
            <person name="Peterson J."/>
            <person name="Pham P.K."/>
            <person name="Rizzo M."/>
            <person name="Rooney T."/>
            <person name="Rowley D."/>
            <person name="Sakano H."/>
            <person name="Salzberg S.L."/>
            <person name="Schwartz J.R."/>
            <person name="Shinn P."/>
            <person name="Southwick A.M."/>
            <person name="Sun H."/>
            <person name="Tallon L.J."/>
            <person name="Tambunga G."/>
            <person name="Toriumi M.J."/>
            <person name="Town C.D."/>
            <person name="Utterback T."/>
            <person name="Van Aken S."/>
            <person name="Vaysberg M."/>
            <person name="Vysotskaia V.S."/>
            <person name="Walker M."/>
            <person name="Wu D."/>
            <person name="Yu G."/>
            <person name="Fraser C.M."/>
            <person name="Venter J.C."/>
            <person name="Davis R.W."/>
        </authorList>
    </citation>
    <scope>NUCLEOTIDE SEQUENCE [LARGE SCALE GENOMIC DNA]</scope>
    <source>
        <strain>cv. Columbia</strain>
    </source>
</reference>
<reference key="2">
    <citation type="journal article" date="2017" name="Plant J.">
        <title>Araport11: a complete reannotation of the Arabidopsis thaliana reference genome.</title>
        <authorList>
            <person name="Cheng C.Y."/>
            <person name="Krishnakumar V."/>
            <person name="Chan A.P."/>
            <person name="Thibaud-Nissen F."/>
            <person name="Schobel S."/>
            <person name="Town C.D."/>
        </authorList>
    </citation>
    <scope>GENOME REANNOTATION</scope>
    <source>
        <strain>cv. Columbia</strain>
    </source>
</reference>
<reference key="3">
    <citation type="journal article" date="2002" name="Science">
        <title>Functional annotation of a full-length Arabidopsis cDNA collection.</title>
        <authorList>
            <person name="Seki M."/>
            <person name="Narusaka M."/>
            <person name="Kamiya A."/>
            <person name="Ishida J."/>
            <person name="Satou M."/>
            <person name="Sakurai T."/>
            <person name="Nakajima M."/>
            <person name="Enju A."/>
            <person name="Akiyama K."/>
            <person name="Oono Y."/>
            <person name="Muramatsu M."/>
            <person name="Hayashizaki Y."/>
            <person name="Kawai J."/>
            <person name="Carninci P."/>
            <person name="Itoh M."/>
            <person name="Ishii Y."/>
            <person name="Arakawa T."/>
            <person name="Shibata K."/>
            <person name="Shinagawa A."/>
            <person name="Shinozaki K."/>
        </authorList>
    </citation>
    <scope>NUCLEOTIDE SEQUENCE [LARGE SCALE MRNA]</scope>
    <source>
        <strain>cv. Columbia</strain>
    </source>
</reference>
<reference key="4">
    <citation type="journal article" date="2010" name="BMC Genomics">
        <title>Genome-wide cloning and sequence analysis of leucine-rich repeat receptor-like protein kinase genes in Arabidopsis thaliana.</title>
        <authorList>
            <person name="Gou X."/>
            <person name="He K."/>
            <person name="Yang H."/>
            <person name="Yuan T."/>
            <person name="Lin H."/>
            <person name="Clouse S.D."/>
            <person name="Li J."/>
        </authorList>
    </citation>
    <scope>NUCLEOTIDE SEQUENCE [LARGE SCALE MRNA]</scope>
    <source>
        <strain>cv. Columbia</strain>
    </source>
</reference>
<name>Y1634_ARATH</name>
<dbReference type="EC" id="2.7.11.1"/>
<dbReference type="EMBL" id="AC008047">
    <property type="protein sequence ID" value="AAF19706.1"/>
    <property type="status" value="ALT_SEQ"/>
    <property type="molecule type" value="Genomic_DNA"/>
</dbReference>
<dbReference type="EMBL" id="CP002684">
    <property type="protein sequence ID" value="AEE34098.1"/>
    <property type="molecule type" value="Genomic_DNA"/>
</dbReference>
<dbReference type="EMBL" id="CP002684">
    <property type="protein sequence ID" value="ANM58821.1"/>
    <property type="molecule type" value="Genomic_DNA"/>
</dbReference>
<dbReference type="EMBL" id="AK117932">
    <property type="protein sequence ID" value="BAC42570.1"/>
    <property type="molecule type" value="mRNA"/>
</dbReference>
<dbReference type="EMBL" id="FJ708668">
    <property type="protein sequence ID" value="ACN59263.1"/>
    <property type="molecule type" value="mRNA"/>
</dbReference>
<dbReference type="RefSeq" id="NP_001321232.1">
    <molecule id="C0LGH8-1"/>
    <property type="nucleotide sequence ID" value="NM_001334093.1"/>
</dbReference>
<dbReference type="RefSeq" id="NP_176532.2">
    <molecule id="C0LGH8-1"/>
    <property type="nucleotide sequence ID" value="NM_105022.3"/>
</dbReference>
<dbReference type="SMR" id="C0LGH8"/>
<dbReference type="BioGRID" id="27870">
    <property type="interactions" value="21"/>
</dbReference>
<dbReference type="FunCoup" id="C0LGH8">
    <property type="interactions" value="2196"/>
</dbReference>
<dbReference type="IntAct" id="C0LGH8">
    <property type="interactions" value="31"/>
</dbReference>
<dbReference type="STRING" id="3702.C0LGH8"/>
<dbReference type="GlyGen" id="C0LGH8">
    <property type="glycosylation" value="2 sites"/>
</dbReference>
<dbReference type="iPTMnet" id="C0LGH8"/>
<dbReference type="PaxDb" id="3702-AT1G63430.2"/>
<dbReference type="ProteomicsDB" id="242394">
    <molecule id="C0LGH8-1"/>
</dbReference>
<dbReference type="EnsemblPlants" id="AT1G63430.1">
    <molecule id="C0LGH8-1"/>
    <property type="protein sequence ID" value="AT1G63430.1"/>
    <property type="gene ID" value="AT1G63430"/>
</dbReference>
<dbReference type="EnsemblPlants" id="AT1G63430.3">
    <molecule id="C0LGH8-1"/>
    <property type="protein sequence ID" value="AT1G63430.3"/>
    <property type="gene ID" value="AT1G63430"/>
</dbReference>
<dbReference type="GeneID" id="842649"/>
<dbReference type="Gramene" id="AT1G63430.1">
    <molecule id="C0LGH8-1"/>
    <property type="protein sequence ID" value="AT1G63430.1"/>
    <property type="gene ID" value="AT1G63430"/>
</dbReference>
<dbReference type="Gramene" id="AT1G63430.3">
    <molecule id="C0LGH8-1"/>
    <property type="protein sequence ID" value="AT1G63430.3"/>
    <property type="gene ID" value="AT1G63430"/>
</dbReference>
<dbReference type="KEGG" id="ath:AT1G63430"/>
<dbReference type="Araport" id="AT1G63430"/>
<dbReference type="TAIR" id="AT1G63430"/>
<dbReference type="eggNOG" id="ENOG502QS4J">
    <property type="taxonomic scope" value="Eukaryota"/>
</dbReference>
<dbReference type="HOGENOM" id="CLU_000288_92_4_1"/>
<dbReference type="InParanoid" id="C0LGH8"/>
<dbReference type="OMA" id="CWKMMFT"/>
<dbReference type="OrthoDB" id="676979at2759"/>
<dbReference type="PhylomeDB" id="C0LGH8"/>
<dbReference type="PRO" id="PR:C0LGH8"/>
<dbReference type="Proteomes" id="UP000006548">
    <property type="component" value="Chromosome 1"/>
</dbReference>
<dbReference type="ExpressionAtlas" id="C0LGH8">
    <property type="expression patterns" value="baseline and differential"/>
</dbReference>
<dbReference type="GO" id="GO:0005886">
    <property type="term" value="C:plasma membrane"/>
    <property type="evidence" value="ECO:0007669"/>
    <property type="project" value="UniProtKB-SubCell"/>
</dbReference>
<dbReference type="GO" id="GO:0005524">
    <property type="term" value="F:ATP binding"/>
    <property type="evidence" value="ECO:0007669"/>
    <property type="project" value="UniProtKB-KW"/>
</dbReference>
<dbReference type="GO" id="GO:0106310">
    <property type="term" value="F:protein serine kinase activity"/>
    <property type="evidence" value="ECO:0007669"/>
    <property type="project" value="RHEA"/>
</dbReference>
<dbReference type="GO" id="GO:0004674">
    <property type="term" value="F:protein serine/threonine kinase activity"/>
    <property type="evidence" value="ECO:0007669"/>
    <property type="project" value="UniProtKB-KW"/>
</dbReference>
<dbReference type="FunFam" id="3.30.200.20:FF:000489">
    <property type="entry name" value="Inactive receptor-like serine/threonine-protein kinase"/>
    <property type="match status" value="1"/>
</dbReference>
<dbReference type="FunFam" id="1.10.510.10:FF:000950">
    <property type="entry name" value="Inactive receptor-like serine/threonine-protein kinase At2g40270"/>
    <property type="match status" value="1"/>
</dbReference>
<dbReference type="FunFam" id="3.80.10.10:FF:001389">
    <property type="entry name" value="Probable LRR receptor-like serine/threonine-protein kinase At1g63430"/>
    <property type="match status" value="1"/>
</dbReference>
<dbReference type="Gene3D" id="3.30.200.20">
    <property type="entry name" value="Phosphorylase Kinase, domain 1"/>
    <property type="match status" value="1"/>
</dbReference>
<dbReference type="Gene3D" id="3.80.10.10">
    <property type="entry name" value="Ribonuclease Inhibitor"/>
    <property type="match status" value="2"/>
</dbReference>
<dbReference type="Gene3D" id="1.10.510.10">
    <property type="entry name" value="Transferase(Phosphotransferase) domain 1"/>
    <property type="match status" value="1"/>
</dbReference>
<dbReference type="InterPro" id="IPR011009">
    <property type="entry name" value="Kinase-like_dom_sf"/>
</dbReference>
<dbReference type="InterPro" id="IPR001611">
    <property type="entry name" value="Leu-rich_rpt"/>
</dbReference>
<dbReference type="InterPro" id="IPR032675">
    <property type="entry name" value="LRR_dom_sf"/>
</dbReference>
<dbReference type="InterPro" id="IPR013210">
    <property type="entry name" value="LRR_N_plant-typ"/>
</dbReference>
<dbReference type="InterPro" id="IPR000719">
    <property type="entry name" value="Prot_kinase_dom"/>
</dbReference>
<dbReference type="InterPro" id="IPR001245">
    <property type="entry name" value="Ser-Thr/Tyr_kinase_cat_dom"/>
</dbReference>
<dbReference type="PANTHER" id="PTHR46084:SF19">
    <property type="entry name" value="PROTEIN KINASE DOMAIN-CONTAINING PROTEIN"/>
    <property type="match status" value="1"/>
</dbReference>
<dbReference type="PANTHER" id="PTHR46084">
    <property type="entry name" value="PROTEIN MALE DISCOVERER 2"/>
    <property type="match status" value="1"/>
</dbReference>
<dbReference type="Pfam" id="PF00560">
    <property type="entry name" value="LRR_1"/>
    <property type="match status" value="2"/>
</dbReference>
<dbReference type="Pfam" id="PF08263">
    <property type="entry name" value="LRRNT_2"/>
    <property type="match status" value="1"/>
</dbReference>
<dbReference type="Pfam" id="PF07714">
    <property type="entry name" value="PK_Tyr_Ser-Thr"/>
    <property type="match status" value="1"/>
</dbReference>
<dbReference type="SUPFAM" id="SSF52058">
    <property type="entry name" value="L domain-like"/>
    <property type="match status" value="1"/>
</dbReference>
<dbReference type="SUPFAM" id="SSF56112">
    <property type="entry name" value="Protein kinase-like (PK-like)"/>
    <property type="match status" value="1"/>
</dbReference>
<dbReference type="PROSITE" id="PS50011">
    <property type="entry name" value="PROTEIN_KINASE_DOM"/>
    <property type="match status" value="1"/>
</dbReference>
<gene>
    <name type="ordered locus">At1g63430</name>
    <name type="ORF">F2K11.19</name>
</gene>
<proteinExistence type="evidence at protein level"/>
<keyword id="KW-0025">Alternative splicing</keyword>
<keyword id="KW-0067">ATP-binding</keyword>
<keyword id="KW-1003">Cell membrane</keyword>
<keyword id="KW-0325">Glycoprotein</keyword>
<keyword id="KW-0418">Kinase</keyword>
<keyword id="KW-0433">Leucine-rich repeat</keyword>
<keyword id="KW-0472">Membrane</keyword>
<keyword id="KW-0547">Nucleotide-binding</keyword>
<keyword id="KW-0675">Receptor</keyword>
<keyword id="KW-1185">Reference proteome</keyword>
<keyword id="KW-0677">Repeat</keyword>
<keyword id="KW-0723">Serine/threonine-protein kinase</keyword>
<keyword id="KW-0732">Signal</keyword>
<keyword id="KW-0808">Transferase</keyword>
<keyword id="KW-0812">Transmembrane</keyword>
<keyword id="KW-1133">Transmembrane helix</keyword>
<protein>
    <recommendedName>
        <fullName>Probable LRR receptor-like serine/threonine-protein kinase At1g63430</fullName>
        <ecNumber>2.7.11.1</ecNumber>
    </recommendedName>
</protein>
<feature type="signal peptide" evidence="2">
    <location>
        <begin position="1"/>
        <end position="22"/>
    </location>
</feature>
<feature type="chain" id="PRO_0000387538" description="Probable LRR receptor-like serine/threonine-protein kinase At1g63430">
    <location>
        <begin position="23"/>
        <end position="664"/>
    </location>
</feature>
<feature type="topological domain" description="Extracellular" evidence="2">
    <location>
        <begin position="23"/>
        <end position="288"/>
    </location>
</feature>
<feature type="transmembrane region" description="Helical" evidence="2">
    <location>
        <begin position="289"/>
        <end position="309"/>
    </location>
</feature>
<feature type="topological domain" description="Cytoplasmic" evidence="2">
    <location>
        <begin position="310"/>
        <end position="664"/>
    </location>
</feature>
<feature type="repeat" description="LRR 1">
    <location>
        <begin position="94"/>
        <end position="116"/>
    </location>
</feature>
<feature type="repeat" description="LRR 2">
    <location>
        <begin position="118"/>
        <end position="140"/>
    </location>
</feature>
<feature type="repeat" description="LRR 3">
    <location>
        <begin position="142"/>
        <end position="165"/>
    </location>
</feature>
<feature type="repeat" description="LRR 4">
    <location>
        <begin position="166"/>
        <end position="178"/>
    </location>
</feature>
<feature type="domain" description="Protein kinase" evidence="3">
    <location>
        <begin position="360"/>
        <end position="642"/>
    </location>
</feature>
<feature type="glycosylation site" description="N-linked (GlcNAc...) asparagine" evidence="2">
    <location>
        <position position="75"/>
    </location>
</feature>
<feature type="glycosylation site" description="N-linked (GlcNAc...) asparagine" evidence="2">
    <location>
        <position position="197"/>
    </location>
</feature>
<feature type="sequence conflict" description="In Ref. 3; BAC42570." evidence="4" ref="3">
    <original>N</original>
    <variation>D</variation>
    <location>
        <position position="50"/>
    </location>
</feature>
<accession>C0LGH8</accession>
<accession>Q8GY10</accession>
<accession>Q9SH29</accession>
<organism>
    <name type="scientific">Arabidopsis thaliana</name>
    <name type="common">Mouse-ear cress</name>
    <dbReference type="NCBI Taxonomy" id="3702"/>
    <lineage>
        <taxon>Eukaryota</taxon>
        <taxon>Viridiplantae</taxon>
        <taxon>Streptophyta</taxon>
        <taxon>Embryophyta</taxon>
        <taxon>Tracheophyta</taxon>
        <taxon>Spermatophyta</taxon>
        <taxon>Magnoliopsida</taxon>
        <taxon>eudicotyledons</taxon>
        <taxon>Gunneridae</taxon>
        <taxon>Pentapetalae</taxon>
        <taxon>rosids</taxon>
        <taxon>malvids</taxon>
        <taxon>Brassicales</taxon>
        <taxon>Brassicaceae</taxon>
        <taxon>Camelineae</taxon>
        <taxon>Arabidopsis</taxon>
    </lineage>
</organism>
<evidence type="ECO:0000250" key="1"/>
<evidence type="ECO:0000255" key="2"/>
<evidence type="ECO:0000255" key="3">
    <source>
        <dbReference type="PROSITE-ProRule" id="PRU00159"/>
    </source>
</evidence>
<evidence type="ECO:0000305" key="4"/>